<evidence type="ECO:0000255" key="1">
    <source>
        <dbReference type="HAMAP-Rule" id="MF_00016"/>
    </source>
</evidence>
<evidence type="ECO:0000305" key="2"/>
<name>RUVB_RHOP5</name>
<accession>Q07H98</accession>
<protein>
    <recommendedName>
        <fullName evidence="1">Holliday junction branch migration complex subunit RuvB</fullName>
        <ecNumber evidence="1">3.6.4.-</ecNumber>
    </recommendedName>
</protein>
<dbReference type="EC" id="3.6.4.-" evidence="1"/>
<dbReference type="EMBL" id="CP000463">
    <property type="protein sequence ID" value="ABJ08686.1"/>
    <property type="status" value="ALT_INIT"/>
    <property type="molecule type" value="Genomic_DNA"/>
</dbReference>
<dbReference type="SMR" id="Q07H98"/>
<dbReference type="STRING" id="316055.RPE_4767"/>
<dbReference type="KEGG" id="rpe:RPE_4767"/>
<dbReference type="eggNOG" id="COG2255">
    <property type="taxonomic scope" value="Bacteria"/>
</dbReference>
<dbReference type="HOGENOM" id="CLU_055599_1_0_5"/>
<dbReference type="OrthoDB" id="9804478at2"/>
<dbReference type="GO" id="GO:0005737">
    <property type="term" value="C:cytoplasm"/>
    <property type="evidence" value="ECO:0007669"/>
    <property type="project" value="UniProtKB-SubCell"/>
</dbReference>
<dbReference type="GO" id="GO:0048476">
    <property type="term" value="C:Holliday junction resolvase complex"/>
    <property type="evidence" value="ECO:0007669"/>
    <property type="project" value="UniProtKB-UniRule"/>
</dbReference>
<dbReference type="GO" id="GO:0005524">
    <property type="term" value="F:ATP binding"/>
    <property type="evidence" value="ECO:0007669"/>
    <property type="project" value="UniProtKB-UniRule"/>
</dbReference>
<dbReference type="GO" id="GO:0016887">
    <property type="term" value="F:ATP hydrolysis activity"/>
    <property type="evidence" value="ECO:0007669"/>
    <property type="project" value="InterPro"/>
</dbReference>
<dbReference type="GO" id="GO:0000400">
    <property type="term" value="F:four-way junction DNA binding"/>
    <property type="evidence" value="ECO:0007669"/>
    <property type="project" value="UniProtKB-UniRule"/>
</dbReference>
<dbReference type="GO" id="GO:0009378">
    <property type="term" value="F:four-way junction helicase activity"/>
    <property type="evidence" value="ECO:0007669"/>
    <property type="project" value="InterPro"/>
</dbReference>
<dbReference type="GO" id="GO:0006310">
    <property type="term" value="P:DNA recombination"/>
    <property type="evidence" value="ECO:0007669"/>
    <property type="project" value="UniProtKB-UniRule"/>
</dbReference>
<dbReference type="GO" id="GO:0006281">
    <property type="term" value="P:DNA repair"/>
    <property type="evidence" value="ECO:0007669"/>
    <property type="project" value="UniProtKB-UniRule"/>
</dbReference>
<dbReference type="CDD" id="cd00009">
    <property type="entry name" value="AAA"/>
    <property type="match status" value="1"/>
</dbReference>
<dbReference type="FunFam" id="3.40.50.300:FF:000073">
    <property type="entry name" value="Holliday junction ATP-dependent DNA helicase RuvB"/>
    <property type="match status" value="1"/>
</dbReference>
<dbReference type="Gene3D" id="1.10.8.60">
    <property type="match status" value="1"/>
</dbReference>
<dbReference type="Gene3D" id="3.40.50.300">
    <property type="entry name" value="P-loop containing nucleotide triphosphate hydrolases"/>
    <property type="match status" value="1"/>
</dbReference>
<dbReference type="Gene3D" id="1.10.10.10">
    <property type="entry name" value="Winged helix-like DNA-binding domain superfamily/Winged helix DNA-binding domain"/>
    <property type="match status" value="1"/>
</dbReference>
<dbReference type="HAMAP" id="MF_00016">
    <property type="entry name" value="DNA_HJ_migration_RuvB"/>
    <property type="match status" value="1"/>
</dbReference>
<dbReference type="InterPro" id="IPR003593">
    <property type="entry name" value="AAA+_ATPase"/>
</dbReference>
<dbReference type="InterPro" id="IPR041445">
    <property type="entry name" value="AAA_lid_4"/>
</dbReference>
<dbReference type="InterPro" id="IPR004605">
    <property type="entry name" value="DNA_helicase_Holl-junc_RuvB"/>
</dbReference>
<dbReference type="InterPro" id="IPR027417">
    <property type="entry name" value="P-loop_NTPase"/>
</dbReference>
<dbReference type="InterPro" id="IPR008824">
    <property type="entry name" value="RuvB-like_N"/>
</dbReference>
<dbReference type="InterPro" id="IPR008823">
    <property type="entry name" value="RuvB_C"/>
</dbReference>
<dbReference type="InterPro" id="IPR036388">
    <property type="entry name" value="WH-like_DNA-bd_sf"/>
</dbReference>
<dbReference type="InterPro" id="IPR036390">
    <property type="entry name" value="WH_DNA-bd_sf"/>
</dbReference>
<dbReference type="NCBIfam" id="NF000868">
    <property type="entry name" value="PRK00080.1"/>
    <property type="match status" value="1"/>
</dbReference>
<dbReference type="NCBIfam" id="TIGR00635">
    <property type="entry name" value="ruvB"/>
    <property type="match status" value="1"/>
</dbReference>
<dbReference type="PANTHER" id="PTHR42848">
    <property type="match status" value="1"/>
</dbReference>
<dbReference type="PANTHER" id="PTHR42848:SF1">
    <property type="entry name" value="HOLLIDAY JUNCTION BRANCH MIGRATION COMPLEX SUBUNIT RUVB"/>
    <property type="match status" value="1"/>
</dbReference>
<dbReference type="Pfam" id="PF17864">
    <property type="entry name" value="AAA_lid_4"/>
    <property type="match status" value="1"/>
</dbReference>
<dbReference type="Pfam" id="PF05491">
    <property type="entry name" value="RuvB_C"/>
    <property type="match status" value="1"/>
</dbReference>
<dbReference type="Pfam" id="PF05496">
    <property type="entry name" value="RuvB_N"/>
    <property type="match status" value="1"/>
</dbReference>
<dbReference type="SMART" id="SM00382">
    <property type="entry name" value="AAA"/>
    <property type="match status" value="1"/>
</dbReference>
<dbReference type="SUPFAM" id="SSF52540">
    <property type="entry name" value="P-loop containing nucleoside triphosphate hydrolases"/>
    <property type="match status" value="1"/>
</dbReference>
<dbReference type="SUPFAM" id="SSF46785">
    <property type="entry name" value="Winged helix' DNA-binding domain"/>
    <property type="match status" value="1"/>
</dbReference>
<comment type="function">
    <text evidence="1">The RuvA-RuvB-RuvC complex processes Holliday junction (HJ) DNA during genetic recombination and DNA repair, while the RuvA-RuvB complex plays an important role in the rescue of blocked DNA replication forks via replication fork reversal (RFR). RuvA specifically binds to HJ cruciform DNA, conferring on it an open structure. The RuvB hexamer acts as an ATP-dependent pump, pulling dsDNA into and through the RuvAB complex. RuvB forms 2 homohexamers on either side of HJ DNA bound by 1 or 2 RuvA tetramers; 4 subunits per hexamer contact DNA at a time. Coordinated motions by a converter formed by DNA-disengaged RuvB subunits stimulates ATP hydrolysis and nucleotide exchange. Immobilization of the converter enables RuvB to convert the ATP-contained energy into a lever motion, pulling 2 nucleotides of DNA out of the RuvA tetramer per ATP hydrolyzed, thus driving DNA branch migration. The RuvB motors rotate together with the DNA substrate, which together with the progressing nucleotide cycle form the mechanistic basis for DNA recombination by continuous HJ branch migration. Branch migration allows RuvC to scan DNA until it finds its consensus sequence, where it cleaves and resolves cruciform DNA.</text>
</comment>
<comment type="catalytic activity">
    <reaction evidence="1">
        <text>ATP + H2O = ADP + phosphate + H(+)</text>
        <dbReference type="Rhea" id="RHEA:13065"/>
        <dbReference type="ChEBI" id="CHEBI:15377"/>
        <dbReference type="ChEBI" id="CHEBI:15378"/>
        <dbReference type="ChEBI" id="CHEBI:30616"/>
        <dbReference type="ChEBI" id="CHEBI:43474"/>
        <dbReference type="ChEBI" id="CHEBI:456216"/>
    </reaction>
</comment>
<comment type="subunit">
    <text evidence="1">Homohexamer. Forms an RuvA(8)-RuvB(12)-Holliday junction (HJ) complex. HJ DNA is sandwiched between 2 RuvA tetramers; dsDNA enters through RuvA and exits via RuvB. An RuvB hexamer assembles on each DNA strand where it exits the tetramer. Each RuvB hexamer is contacted by two RuvA subunits (via domain III) on 2 adjacent RuvB subunits; this complex drives branch migration. In the full resolvosome a probable DNA-RuvA(4)-RuvB(12)-RuvC(2) complex forms which resolves the HJ.</text>
</comment>
<comment type="subcellular location">
    <subcellularLocation>
        <location evidence="1">Cytoplasm</location>
    </subcellularLocation>
</comment>
<comment type="domain">
    <text evidence="1">Has 3 domains, the large (RuvB-L) and small ATPase (RuvB-S) domains and the C-terminal head (RuvB-H) domain. The head domain binds DNA, while the ATPase domains jointly bind ATP, ADP or are empty depending on the state of the subunit in the translocation cycle. During a single DNA translocation step the structure of each domain remains the same, but their relative positions change.</text>
</comment>
<comment type="similarity">
    <text evidence="1">Belongs to the RuvB family.</text>
</comment>
<comment type="sequence caution" evidence="2">
    <conflict type="erroneous initiation">
        <sequence resource="EMBL-CDS" id="ABJ08686"/>
    </conflict>
</comment>
<reference key="1">
    <citation type="submission" date="2006-09" db="EMBL/GenBank/DDBJ databases">
        <title>Complete sequence of Rhodopseudomonas palustris BisA53.</title>
        <authorList>
            <consortium name="US DOE Joint Genome Institute"/>
            <person name="Copeland A."/>
            <person name="Lucas S."/>
            <person name="Lapidus A."/>
            <person name="Barry K."/>
            <person name="Detter J.C."/>
            <person name="Glavina del Rio T."/>
            <person name="Hammon N."/>
            <person name="Israni S."/>
            <person name="Dalin E."/>
            <person name="Tice H."/>
            <person name="Pitluck S."/>
            <person name="Chain P."/>
            <person name="Malfatti S."/>
            <person name="Shin M."/>
            <person name="Vergez L."/>
            <person name="Schmutz J."/>
            <person name="Larimer F."/>
            <person name="Land M."/>
            <person name="Hauser L."/>
            <person name="Pelletier D.A."/>
            <person name="Kyrpides N."/>
            <person name="Kim E."/>
            <person name="Harwood C.S."/>
            <person name="Oda Y."/>
            <person name="Richardson P."/>
        </authorList>
    </citation>
    <scope>NUCLEOTIDE SEQUENCE [LARGE SCALE GENOMIC DNA]</scope>
    <source>
        <strain>BisA53</strain>
    </source>
</reference>
<organism>
    <name type="scientific">Rhodopseudomonas palustris (strain BisA53)</name>
    <dbReference type="NCBI Taxonomy" id="316055"/>
    <lineage>
        <taxon>Bacteria</taxon>
        <taxon>Pseudomonadati</taxon>
        <taxon>Pseudomonadota</taxon>
        <taxon>Alphaproteobacteria</taxon>
        <taxon>Hyphomicrobiales</taxon>
        <taxon>Nitrobacteraceae</taxon>
        <taxon>Rhodopseudomonas</taxon>
    </lineage>
</organism>
<keyword id="KW-0067">ATP-binding</keyword>
<keyword id="KW-0963">Cytoplasm</keyword>
<keyword id="KW-0227">DNA damage</keyword>
<keyword id="KW-0233">DNA recombination</keyword>
<keyword id="KW-0234">DNA repair</keyword>
<keyword id="KW-0238">DNA-binding</keyword>
<keyword id="KW-0378">Hydrolase</keyword>
<keyword id="KW-0547">Nucleotide-binding</keyword>
<feature type="chain" id="PRO_0000322835" description="Holliday junction branch migration complex subunit RuvB">
    <location>
        <begin position="1"/>
        <end position="347"/>
    </location>
</feature>
<feature type="region of interest" description="Large ATPase domain (RuvB-L)" evidence="1">
    <location>
        <begin position="1"/>
        <end position="183"/>
    </location>
</feature>
<feature type="region of interest" description="Small ATPAse domain (RuvB-S)" evidence="1">
    <location>
        <begin position="184"/>
        <end position="254"/>
    </location>
</feature>
<feature type="region of interest" description="Head domain (RuvB-H)" evidence="1">
    <location>
        <begin position="257"/>
        <end position="347"/>
    </location>
</feature>
<feature type="binding site" evidence="1">
    <location>
        <position position="22"/>
    </location>
    <ligand>
        <name>ATP</name>
        <dbReference type="ChEBI" id="CHEBI:30616"/>
    </ligand>
</feature>
<feature type="binding site" evidence="1">
    <location>
        <position position="23"/>
    </location>
    <ligand>
        <name>ATP</name>
        <dbReference type="ChEBI" id="CHEBI:30616"/>
    </ligand>
</feature>
<feature type="binding site" evidence="1">
    <location>
        <position position="64"/>
    </location>
    <ligand>
        <name>ATP</name>
        <dbReference type="ChEBI" id="CHEBI:30616"/>
    </ligand>
</feature>
<feature type="binding site" evidence="1">
    <location>
        <position position="67"/>
    </location>
    <ligand>
        <name>ATP</name>
        <dbReference type="ChEBI" id="CHEBI:30616"/>
    </ligand>
</feature>
<feature type="binding site" evidence="1">
    <location>
        <position position="68"/>
    </location>
    <ligand>
        <name>ATP</name>
        <dbReference type="ChEBI" id="CHEBI:30616"/>
    </ligand>
</feature>
<feature type="binding site" evidence="1">
    <location>
        <position position="68"/>
    </location>
    <ligand>
        <name>Mg(2+)</name>
        <dbReference type="ChEBI" id="CHEBI:18420"/>
    </ligand>
</feature>
<feature type="binding site" evidence="1">
    <location>
        <position position="69"/>
    </location>
    <ligand>
        <name>ATP</name>
        <dbReference type="ChEBI" id="CHEBI:30616"/>
    </ligand>
</feature>
<feature type="binding site" evidence="1">
    <location>
        <begin position="130"/>
        <end position="132"/>
    </location>
    <ligand>
        <name>ATP</name>
        <dbReference type="ChEBI" id="CHEBI:30616"/>
    </ligand>
</feature>
<feature type="binding site" evidence="1">
    <location>
        <position position="173"/>
    </location>
    <ligand>
        <name>ATP</name>
        <dbReference type="ChEBI" id="CHEBI:30616"/>
    </ligand>
</feature>
<feature type="binding site" evidence="1">
    <location>
        <position position="183"/>
    </location>
    <ligand>
        <name>ATP</name>
        <dbReference type="ChEBI" id="CHEBI:30616"/>
    </ligand>
</feature>
<feature type="binding site" evidence="1">
    <location>
        <position position="220"/>
    </location>
    <ligand>
        <name>ATP</name>
        <dbReference type="ChEBI" id="CHEBI:30616"/>
    </ligand>
</feature>
<feature type="binding site" evidence="1">
    <location>
        <position position="293"/>
    </location>
    <ligand>
        <name>DNA</name>
        <dbReference type="ChEBI" id="CHEBI:16991"/>
    </ligand>
</feature>
<feature type="binding site" evidence="1">
    <location>
        <position position="312"/>
    </location>
    <ligand>
        <name>DNA</name>
        <dbReference type="ChEBI" id="CHEBI:16991"/>
    </ligand>
</feature>
<feature type="binding site" evidence="1">
    <location>
        <position position="317"/>
    </location>
    <ligand>
        <name>DNA</name>
        <dbReference type="ChEBI" id="CHEBI:16991"/>
    </ligand>
</feature>
<sequence>MTPPSRIVTPERRADDVGDTALRPQTLAEFVGQQQARANLQIFIDAARKRQEALDHVLFVGPPGLGKTTLAQIVARELGVGFRATSGPVIAKAGDLAALLTNLEERDVLFIDEIHRLSPAVEEVLYPAMEDFQLDLIIGEGPAARSVKIELSKFTLVGATTRAGLLTNPLRDRFGIPIRLNFYTVEELEGIVSRGARVLGTGITPDGANEIARRARGTPRIAGRLLRRVRDFASAADAAAIDRRIADHALSALEVDAAGLDAMDRRYLSTIALNYGGGPVGVETMAAALSEPRDAIEDIIEPFLIQCGYLQRTPRGRLLTSHAFKHLGLAEPSREASQFGLFGGDEE</sequence>
<gene>
    <name evidence="1" type="primary">ruvB</name>
    <name type="ordered locus">RPE_4767</name>
</gene>
<proteinExistence type="inferred from homology"/>